<evidence type="ECO:0000250" key="1"/>
<evidence type="ECO:0000255" key="2"/>
<evidence type="ECO:0000255" key="3">
    <source>
        <dbReference type="PROSITE-ProRule" id="PRU00716"/>
    </source>
</evidence>
<evidence type="ECO:0000305" key="4"/>
<reference key="1">
    <citation type="journal article" date="2004" name="Proc. Natl. Acad. Sci. U.S.A.">
        <title>The diploid genome sequence of Candida albicans.</title>
        <authorList>
            <person name="Jones T."/>
            <person name="Federspiel N.A."/>
            <person name="Chibana H."/>
            <person name="Dungan J."/>
            <person name="Kalman S."/>
            <person name="Magee B.B."/>
            <person name="Newport G."/>
            <person name="Thorstenson Y.R."/>
            <person name="Agabian N."/>
            <person name="Magee P.T."/>
            <person name="Davis R.W."/>
            <person name="Scherer S."/>
        </authorList>
    </citation>
    <scope>NUCLEOTIDE SEQUENCE [LARGE SCALE GENOMIC DNA]</scope>
    <source>
        <strain>SC5314 / ATCC MYA-2876</strain>
    </source>
</reference>
<reference key="2">
    <citation type="journal article" date="2007" name="Genome Biol.">
        <title>Assembly of the Candida albicans genome into sixteen supercontigs aligned on the eight chromosomes.</title>
        <authorList>
            <person name="van het Hoog M."/>
            <person name="Rast T.J."/>
            <person name="Martchenko M."/>
            <person name="Grindle S."/>
            <person name="Dignard D."/>
            <person name="Hogues H."/>
            <person name="Cuomo C."/>
            <person name="Berriman M."/>
            <person name="Scherer S."/>
            <person name="Magee B.B."/>
            <person name="Whiteway M."/>
            <person name="Chibana H."/>
            <person name="Nantel A."/>
            <person name="Magee P.T."/>
        </authorList>
    </citation>
    <scope>GENOME REANNOTATION</scope>
    <source>
        <strain>SC5314 / ATCC MYA-2876</strain>
    </source>
</reference>
<reference key="3">
    <citation type="journal article" date="2013" name="Genome Biol.">
        <title>Assembly of a phased diploid Candida albicans genome facilitates allele-specific measurements and provides a simple model for repeat and indel structure.</title>
        <authorList>
            <person name="Muzzey D."/>
            <person name="Schwartz K."/>
            <person name="Weissman J.S."/>
            <person name="Sherlock G."/>
        </authorList>
    </citation>
    <scope>NUCLEOTIDE SEQUENCE [LARGE SCALE GENOMIC DNA]</scope>
    <scope>GENOME REANNOTATION</scope>
    <source>
        <strain>SC5314 / ATCC MYA-2876</strain>
    </source>
</reference>
<name>MCR1_CANAL</name>
<accession>Q59M70</accession>
<accession>A0A1D8PPU2</accession>
<protein>
    <recommendedName>
        <fullName>NADH-cytochrome b5 reductase 2</fullName>
        <ecNumber>1.6.2.2</ecNumber>
    </recommendedName>
    <alternativeName>
        <fullName>Mitochondrial cytochrome b reductase</fullName>
    </alternativeName>
</protein>
<keyword id="KW-0274">FAD</keyword>
<keyword id="KW-0285">Flavoprotein</keyword>
<keyword id="KW-0472">Membrane</keyword>
<keyword id="KW-0496">Mitochondrion</keyword>
<keyword id="KW-1000">Mitochondrion outer membrane</keyword>
<keyword id="KW-0520">NAD</keyword>
<keyword id="KW-0560">Oxidoreductase</keyword>
<keyword id="KW-1185">Reference proteome</keyword>
<keyword id="KW-0812">Transmembrane</keyword>
<keyword id="KW-1133">Transmembrane helix</keyword>
<dbReference type="EC" id="1.6.2.2"/>
<dbReference type="EMBL" id="CP017628">
    <property type="protein sequence ID" value="AOW30140.1"/>
    <property type="molecule type" value="Genomic_DNA"/>
</dbReference>
<dbReference type="RefSeq" id="XP_710845.1">
    <property type="nucleotide sequence ID" value="XM_705753.1"/>
</dbReference>
<dbReference type="SMR" id="Q59M70"/>
<dbReference type="BioGRID" id="1230654">
    <property type="interactions" value="1"/>
</dbReference>
<dbReference type="FunCoup" id="Q59M70">
    <property type="interactions" value="350"/>
</dbReference>
<dbReference type="STRING" id="237561.Q59M70"/>
<dbReference type="EnsemblFungi" id="C6_02040W_A-T">
    <property type="protein sequence ID" value="C6_02040W_A-T-p1"/>
    <property type="gene ID" value="C6_02040W_A"/>
</dbReference>
<dbReference type="GeneID" id="3647561"/>
<dbReference type="KEGG" id="cal:CAALFM_C602040WA"/>
<dbReference type="CGD" id="CAL0000182452">
    <property type="gene designation" value="MCR1"/>
</dbReference>
<dbReference type="VEuPathDB" id="FungiDB:C6_02040W_A"/>
<dbReference type="eggNOG" id="KOG0534">
    <property type="taxonomic scope" value="Eukaryota"/>
</dbReference>
<dbReference type="HOGENOM" id="CLU_003827_9_1_1"/>
<dbReference type="InParanoid" id="Q59M70"/>
<dbReference type="OMA" id="KGPEMQK"/>
<dbReference type="OrthoDB" id="432685at2759"/>
<dbReference type="PRO" id="PR:Q59M70"/>
<dbReference type="Proteomes" id="UP000000559">
    <property type="component" value="Chromosome 6"/>
</dbReference>
<dbReference type="GO" id="GO:0005741">
    <property type="term" value="C:mitochondrial outer membrane"/>
    <property type="evidence" value="ECO:0007669"/>
    <property type="project" value="UniProtKB-SubCell"/>
</dbReference>
<dbReference type="GO" id="GO:0004128">
    <property type="term" value="F:cytochrome-b5 reductase activity, acting on NAD(P)H"/>
    <property type="evidence" value="ECO:0000318"/>
    <property type="project" value="GO_Central"/>
</dbReference>
<dbReference type="GO" id="GO:0006696">
    <property type="term" value="P:ergosterol biosynthetic process"/>
    <property type="evidence" value="ECO:0000318"/>
    <property type="project" value="GO_Central"/>
</dbReference>
<dbReference type="CDD" id="cd06183">
    <property type="entry name" value="cyt_b5_reduct_like"/>
    <property type="match status" value="1"/>
</dbReference>
<dbReference type="FunFam" id="2.40.30.10:FF:000032">
    <property type="entry name" value="NADH-cytochrome b5 reductase"/>
    <property type="match status" value="1"/>
</dbReference>
<dbReference type="FunFam" id="3.40.50.80:FF:000009">
    <property type="entry name" value="NADH-cytochrome b5 reductase"/>
    <property type="match status" value="1"/>
</dbReference>
<dbReference type="Gene3D" id="3.40.50.80">
    <property type="entry name" value="Nucleotide-binding domain of ferredoxin-NADP reductase (FNR) module"/>
    <property type="match status" value="1"/>
</dbReference>
<dbReference type="Gene3D" id="2.40.30.10">
    <property type="entry name" value="Translation factors"/>
    <property type="match status" value="1"/>
</dbReference>
<dbReference type="InterPro" id="IPR001834">
    <property type="entry name" value="CBR-like"/>
</dbReference>
<dbReference type="InterPro" id="IPR008333">
    <property type="entry name" value="Cbr1-like_FAD-bd_dom"/>
</dbReference>
<dbReference type="InterPro" id="IPR017927">
    <property type="entry name" value="FAD-bd_FR_type"/>
</dbReference>
<dbReference type="InterPro" id="IPR001709">
    <property type="entry name" value="Flavoprot_Pyr_Nucl_cyt_Rdtase"/>
</dbReference>
<dbReference type="InterPro" id="IPR039261">
    <property type="entry name" value="FNR_nucleotide-bd"/>
</dbReference>
<dbReference type="InterPro" id="IPR001433">
    <property type="entry name" value="OxRdtase_FAD/NAD-bd"/>
</dbReference>
<dbReference type="InterPro" id="IPR017938">
    <property type="entry name" value="Riboflavin_synthase-like_b-brl"/>
</dbReference>
<dbReference type="PANTHER" id="PTHR19370">
    <property type="entry name" value="NADH-CYTOCHROME B5 REDUCTASE"/>
    <property type="match status" value="1"/>
</dbReference>
<dbReference type="PANTHER" id="PTHR19370:SF171">
    <property type="entry name" value="NADH-CYTOCHROME B5 REDUCTASE 2"/>
    <property type="match status" value="1"/>
</dbReference>
<dbReference type="Pfam" id="PF00970">
    <property type="entry name" value="FAD_binding_6"/>
    <property type="match status" value="1"/>
</dbReference>
<dbReference type="Pfam" id="PF00175">
    <property type="entry name" value="NAD_binding_1"/>
    <property type="match status" value="1"/>
</dbReference>
<dbReference type="PRINTS" id="PR00406">
    <property type="entry name" value="CYTB5RDTASE"/>
</dbReference>
<dbReference type="PRINTS" id="PR00371">
    <property type="entry name" value="FPNCR"/>
</dbReference>
<dbReference type="SUPFAM" id="SSF52343">
    <property type="entry name" value="Ferredoxin reductase-like, C-terminal NADP-linked domain"/>
    <property type="match status" value="1"/>
</dbReference>
<dbReference type="SUPFAM" id="SSF63380">
    <property type="entry name" value="Riboflavin synthase domain-like"/>
    <property type="match status" value="1"/>
</dbReference>
<dbReference type="PROSITE" id="PS51384">
    <property type="entry name" value="FAD_FR"/>
    <property type="match status" value="1"/>
</dbReference>
<feature type="chain" id="PRO_0000330176" description="NADH-cytochrome b5 reductase 2">
    <location>
        <begin position="1"/>
        <end position="301"/>
    </location>
</feature>
<feature type="transmembrane region" description="Helical" evidence="2">
    <location>
        <begin position="14"/>
        <end position="30"/>
    </location>
</feature>
<feature type="domain" description="FAD-binding FR-type" evidence="3">
    <location>
        <begin position="51"/>
        <end position="155"/>
    </location>
</feature>
<feature type="binding site" evidence="1">
    <location>
        <begin position="158"/>
        <end position="193"/>
    </location>
    <ligand>
        <name>FAD</name>
        <dbReference type="ChEBI" id="CHEBI:57692"/>
    </ligand>
</feature>
<gene>
    <name type="primary">MCR1</name>
    <name type="ordered locus">CAALFM_C602040WA</name>
    <name type="ORF">CaO19.11001</name>
    <name type="ORF">CaO19.3507</name>
</gene>
<proteinExistence type="inferred from homology"/>
<sequence>MLTHHLSKLATPKFLVPFAGATALSIGLALQYSTSNNYIANETGKTFTDSNEWVDLKLSKSIDLTHNTKHLVFKLKDENDVSGLITASCLLTKFVTPKGNNVIRPYTPVSDVNQSGEIDFVIKKYDGGKMSSHIFDLKEGETLSFKGPIVKWKWEPNQFKSIALIGGGTGITPLYQLLHQITSNPKDNTKVNLIYGNLTPEDILLKKEIDAIASKHKDQVKVHYFVDKADEKKWEGQIGFITKEFLQKELEKPGSDFKVFVCGPPGLYKAISGPKVSPTDQGELTGALKDLGFEKEHVFKF</sequence>
<organism>
    <name type="scientific">Candida albicans (strain SC5314 / ATCC MYA-2876)</name>
    <name type="common">Yeast</name>
    <dbReference type="NCBI Taxonomy" id="237561"/>
    <lineage>
        <taxon>Eukaryota</taxon>
        <taxon>Fungi</taxon>
        <taxon>Dikarya</taxon>
        <taxon>Ascomycota</taxon>
        <taxon>Saccharomycotina</taxon>
        <taxon>Pichiomycetes</taxon>
        <taxon>Debaryomycetaceae</taxon>
        <taxon>Candida/Lodderomyces clade</taxon>
        <taxon>Candida</taxon>
    </lineage>
</organism>
<comment type="function">
    <text evidence="1">May mediate the reduction of outer membrane cytochrome b5.</text>
</comment>
<comment type="catalytic activity">
    <reaction>
        <text>2 Fe(III)-[cytochrome b5] + NADH = 2 Fe(II)-[cytochrome b5] + NAD(+) + H(+)</text>
        <dbReference type="Rhea" id="RHEA:46680"/>
        <dbReference type="Rhea" id="RHEA-COMP:10438"/>
        <dbReference type="Rhea" id="RHEA-COMP:10439"/>
        <dbReference type="ChEBI" id="CHEBI:15378"/>
        <dbReference type="ChEBI" id="CHEBI:29033"/>
        <dbReference type="ChEBI" id="CHEBI:29034"/>
        <dbReference type="ChEBI" id="CHEBI:57540"/>
        <dbReference type="ChEBI" id="CHEBI:57945"/>
        <dbReference type="EC" id="1.6.2.2"/>
    </reaction>
</comment>
<comment type="cofactor">
    <cofactor evidence="1">
        <name>FAD</name>
        <dbReference type="ChEBI" id="CHEBI:57692"/>
    </cofactor>
</comment>
<comment type="subcellular location">
    <subcellularLocation>
        <location evidence="1">Mitochondrion outer membrane</location>
        <topology evidence="1">Single-pass membrane protein</topology>
    </subcellularLocation>
</comment>
<comment type="similarity">
    <text evidence="4">Belongs to the flavoprotein pyridine nucleotide cytochrome reductase family.</text>
</comment>